<comment type="function">
    <text evidence="1">Binds as a heterodimer with protein bS6 to the central domain of the 16S rRNA, where it helps stabilize the platform of the 30S subunit.</text>
</comment>
<comment type="subunit">
    <text evidence="1">Part of the 30S ribosomal subunit. Forms a tight heterodimer with protein bS6.</text>
</comment>
<comment type="similarity">
    <text evidence="1">Belongs to the bacterial ribosomal protein bS18 family.</text>
</comment>
<dbReference type="EMBL" id="CP000083">
    <property type="protein sequence ID" value="AAZ24350.1"/>
    <property type="molecule type" value="Genomic_DNA"/>
</dbReference>
<dbReference type="RefSeq" id="WP_011041278.1">
    <property type="nucleotide sequence ID" value="NC_003910.7"/>
</dbReference>
<dbReference type="SMR" id="Q489T9"/>
<dbReference type="STRING" id="167879.CPS_0417"/>
<dbReference type="KEGG" id="cps:CPS_0417"/>
<dbReference type="eggNOG" id="COG0238">
    <property type="taxonomic scope" value="Bacteria"/>
</dbReference>
<dbReference type="HOGENOM" id="CLU_148710_2_2_6"/>
<dbReference type="Proteomes" id="UP000000547">
    <property type="component" value="Chromosome"/>
</dbReference>
<dbReference type="GO" id="GO:0022627">
    <property type="term" value="C:cytosolic small ribosomal subunit"/>
    <property type="evidence" value="ECO:0007669"/>
    <property type="project" value="TreeGrafter"/>
</dbReference>
<dbReference type="GO" id="GO:0070181">
    <property type="term" value="F:small ribosomal subunit rRNA binding"/>
    <property type="evidence" value="ECO:0007669"/>
    <property type="project" value="TreeGrafter"/>
</dbReference>
<dbReference type="GO" id="GO:0003735">
    <property type="term" value="F:structural constituent of ribosome"/>
    <property type="evidence" value="ECO:0007669"/>
    <property type="project" value="InterPro"/>
</dbReference>
<dbReference type="GO" id="GO:0006412">
    <property type="term" value="P:translation"/>
    <property type="evidence" value="ECO:0007669"/>
    <property type="project" value="UniProtKB-UniRule"/>
</dbReference>
<dbReference type="FunFam" id="4.10.640.10:FF:000001">
    <property type="entry name" value="30S ribosomal protein S18"/>
    <property type="match status" value="1"/>
</dbReference>
<dbReference type="Gene3D" id="4.10.640.10">
    <property type="entry name" value="Ribosomal protein S18"/>
    <property type="match status" value="1"/>
</dbReference>
<dbReference type="HAMAP" id="MF_00270">
    <property type="entry name" value="Ribosomal_bS18"/>
    <property type="match status" value="1"/>
</dbReference>
<dbReference type="InterPro" id="IPR001648">
    <property type="entry name" value="Ribosomal_bS18"/>
</dbReference>
<dbReference type="InterPro" id="IPR018275">
    <property type="entry name" value="Ribosomal_bS18_CS"/>
</dbReference>
<dbReference type="InterPro" id="IPR036870">
    <property type="entry name" value="Ribosomal_bS18_sf"/>
</dbReference>
<dbReference type="NCBIfam" id="TIGR00165">
    <property type="entry name" value="S18"/>
    <property type="match status" value="1"/>
</dbReference>
<dbReference type="PANTHER" id="PTHR13479">
    <property type="entry name" value="30S RIBOSOMAL PROTEIN S18"/>
    <property type="match status" value="1"/>
</dbReference>
<dbReference type="PANTHER" id="PTHR13479:SF40">
    <property type="entry name" value="SMALL RIBOSOMAL SUBUNIT PROTEIN BS18M"/>
    <property type="match status" value="1"/>
</dbReference>
<dbReference type="Pfam" id="PF01084">
    <property type="entry name" value="Ribosomal_S18"/>
    <property type="match status" value="1"/>
</dbReference>
<dbReference type="PRINTS" id="PR00974">
    <property type="entry name" value="RIBOSOMALS18"/>
</dbReference>
<dbReference type="SUPFAM" id="SSF46911">
    <property type="entry name" value="Ribosomal protein S18"/>
    <property type="match status" value="1"/>
</dbReference>
<dbReference type="PROSITE" id="PS00057">
    <property type="entry name" value="RIBOSOMAL_S18"/>
    <property type="match status" value="1"/>
</dbReference>
<reference key="1">
    <citation type="journal article" date="2005" name="Proc. Natl. Acad. Sci. U.S.A.">
        <title>The psychrophilic lifestyle as revealed by the genome sequence of Colwellia psychrerythraea 34H through genomic and proteomic analyses.</title>
        <authorList>
            <person name="Methe B.A."/>
            <person name="Nelson K.E."/>
            <person name="Deming J.W."/>
            <person name="Momen B."/>
            <person name="Melamud E."/>
            <person name="Zhang X."/>
            <person name="Moult J."/>
            <person name="Madupu R."/>
            <person name="Nelson W.C."/>
            <person name="Dodson R.J."/>
            <person name="Brinkac L.M."/>
            <person name="Daugherty S.C."/>
            <person name="Durkin A.S."/>
            <person name="DeBoy R.T."/>
            <person name="Kolonay J.F."/>
            <person name="Sullivan S.A."/>
            <person name="Zhou L."/>
            <person name="Davidsen T.M."/>
            <person name="Wu M."/>
            <person name="Huston A.L."/>
            <person name="Lewis M."/>
            <person name="Weaver B."/>
            <person name="Weidman J.F."/>
            <person name="Khouri H."/>
            <person name="Utterback T.R."/>
            <person name="Feldblyum T.V."/>
            <person name="Fraser C.M."/>
        </authorList>
    </citation>
    <scope>NUCLEOTIDE SEQUENCE [LARGE SCALE GENOMIC DNA]</scope>
    <source>
        <strain>34H / ATCC BAA-681</strain>
    </source>
</reference>
<sequence>MSRFFRRRKFCRFTAEGATSIDYKDIATLKNYITESGKIVPSRITGTAAKYQRQLTRAIKRARYLSLLPYTDLHK</sequence>
<protein>
    <recommendedName>
        <fullName evidence="1">Small ribosomal subunit protein bS18</fullName>
    </recommendedName>
    <alternativeName>
        <fullName evidence="2">30S ribosomal protein S18</fullName>
    </alternativeName>
</protein>
<accession>Q489T9</accession>
<name>RS18_COLP3</name>
<proteinExistence type="inferred from homology"/>
<evidence type="ECO:0000255" key="1">
    <source>
        <dbReference type="HAMAP-Rule" id="MF_00270"/>
    </source>
</evidence>
<evidence type="ECO:0000305" key="2"/>
<organism>
    <name type="scientific">Colwellia psychrerythraea (strain 34H / ATCC BAA-681)</name>
    <name type="common">Vibrio psychroerythus</name>
    <dbReference type="NCBI Taxonomy" id="167879"/>
    <lineage>
        <taxon>Bacteria</taxon>
        <taxon>Pseudomonadati</taxon>
        <taxon>Pseudomonadota</taxon>
        <taxon>Gammaproteobacteria</taxon>
        <taxon>Alteromonadales</taxon>
        <taxon>Colwelliaceae</taxon>
        <taxon>Colwellia</taxon>
    </lineage>
</organism>
<feature type="chain" id="PRO_1000003490" description="Small ribosomal subunit protein bS18">
    <location>
        <begin position="1"/>
        <end position="75"/>
    </location>
</feature>
<keyword id="KW-0687">Ribonucleoprotein</keyword>
<keyword id="KW-0689">Ribosomal protein</keyword>
<keyword id="KW-0694">RNA-binding</keyword>
<keyword id="KW-0699">rRNA-binding</keyword>
<gene>
    <name evidence="1" type="primary">rpsR</name>
    <name type="ordered locus">CPS_0417</name>
</gene>